<name>CHEB_PSEA6</name>
<feature type="chain" id="PRO_0000264299" description="Protein-glutamate methylesterase/protein-glutamine glutaminase">
    <location>
        <begin position="1"/>
        <end position="379"/>
    </location>
</feature>
<feature type="domain" description="Response regulatory" evidence="1">
    <location>
        <begin position="4"/>
        <end position="121"/>
    </location>
</feature>
<feature type="domain" description="CheB-type methylesterase" evidence="1">
    <location>
        <begin position="186"/>
        <end position="379"/>
    </location>
</feature>
<feature type="active site" evidence="1">
    <location>
        <position position="198"/>
    </location>
</feature>
<feature type="active site" evidence="1">
    <location>
        <position position="225"/>
    </location>
</feature>
<feature type="active site" evidence="1">
    <location>
        <position position="323"/>
    </location>
</feature>
<feature type="modified residue" description="4-aspartylphosphate" evidence="1">
    <location>
        <position position="55"/>
    </location>
</feature>
<comment type="function">
    <text evidence="1">Involved in chemotaxis. Part of a chemotaxis signal transduction system that modulates chemotaxis in response to various stimuli. Catalyzes the demethylation of specific methylglutamate residues introduced into the chemoreceptors (methyl-accepting chemotaxis proteins or MCP) by CheR. Also mediates the irreversible deamidation of specific glutamine residues to glutamic acid.</text>
</comment>
<comment type="catalytic activity">
    <reaction evidence="1">
        <text>[protein]-L-glutamate 5-O-methyl ester + H2O = L-glutamyl-[protein] + methanol + H(+)</text>
        <dbReference type="Rhea" id="RHEA:23236"/>
        <dbReference type="Rhea" id="RHEA-COMP:10208"/>
        <dbReference type="Rhea" id="RHEA-COMP:10311"/>
        <dbReference type="ChEBI" id="CHEBI:15377"/>
        <dbReference type="ChEBI" id="CHEBI:15378"/>
        <dbReference type="ChEBI" id="CHEBI:17790"/>
        <dbReference type="ChEBI" id="CHEBI:29973"/>
        <dbReference type="ChEBI" id="CHEBI:82795"/>
        <dbReference type="EC" id="3.1.1.61"/>
    </reaction>
</comment>
<comment type="catalytic activity">
    <reaction evidence="1">
        <text>L-glutaminyl-[protein] + H2O = L-glutamyl-[protein] + NH4(+)</text>
        <dbReference type="Rhea" id="RHEA:16441"/>
        <dbReference type="Rhea" id="RHEA-COMP:10207"/>
        <dbReference type="Rhea" id="RHEA-COMP:10208"/>
        <dbReference type="ChEBI" id="CHEBI:15377"/>
        <dbReference type="ChEBI" id="CHEBI:28938"/>
        <dbReference type="ChEBI" id="CHEBI:29973"/>
        <dbReference type="ChEBI" id="CHEBI:30011"/>
        <dbReference type="EC" id="3.5.1.44"/>
    </reaction>
</comment>
<comment type="subcellular location">
    <subcellularLocation>
        <location evidence="1">Cytoplasm</location>
    </subcellularLocation>
</comment>
<comment type="domain">
    <text evidence="1">Contains a C-terminal catalytic domain, and an N-terminal region which modulates catalytic activity.</text>
</comment>
<comment type="PTM">
    <text evidence="1">Phosphorylated by CheA. Phosphorylation of the N-terminal regulatory domain activates the methylesterase activity.</text>
</comment>
<comment type="similarity">
    <text evidence="1">Belongs to the CheB family.</text>
</comment>
<dbReference type="EC" id="3.1.1.61" evidence="1"/>
<dbReference type="EC" id="3.5.1.44" evidence="1"/>
<dbReference type="EMBL" id="CP000388">
    <property type="protein sequence ID" value="ABG41532.1"/>
    <property type="molecule type" value="Genomic_DNA"/>
</dbReference>
<dbReference type="RefSeq" id="WP_011575776.1">
    <property type="nucleotide sequence ID" value="NC_008228.1"/>
</dbReference>
<dbReference type="SMR" id="Q15RF6"/>
<dbReference type="STRING" id="342610.Patl_3026"/>
<dbReference type="KEGG" id="pat:Patl_3026"/>
<dbReference type="eggNOG" id="COG2201">
    <property type="taxonomic scope" value="Bacteria"/>
</dbReference>
<dbReference type="HOGENOM" id="CLU_000445_51_0_6"/>
<dbReference type="OrthoDB" id="9793421at2"/>
<dbReference type="Proteomes" id="UP000001981">
    <property type="component" value="Chromosome"/>
</dbReference>
<dbReference type="GO" id="GO:0005737">
    <property type="term" value="C:cytoplasm"/>
    <property type="evidence" value="ECO:0007669"/>
    <property type="project" value="UniProtKB-SubCell"/>
</dbReference>
<dbReference type="GO" id="GO:0000156">
    <property type="term" value="F:phosphorelay response regulator activity"/>
    <property type="evidence" value="ECO:0007669"/>
    <property type="project" value="InterPro"/>
</dbReference>
<dbReference type="GO" id="GO:0008984">
    <property type="term" value="F:protein-glutamate methylesterase activity"/>
    <property type="evidence" value="ECO:0007669"/>
    <property type="project" value="UniProtKB-UniRule"/>
</dbReference>
<dbReference type="GO" id="GO:0050568">
    <property type="term" value="F:protein-glutamine glutaminase activity"/>
    <property type="evidence" value="ECO:0007669"/>
    <property type="project" value="UniProtKB-UniRule"/>
</dbReference>
<dbReference type="GO" id="GO:0006935">
    <property type="term" value="P:chemotaxis"/>
    <property type="evidence" value="ECO:0007669"/>
    <property type="project" value="UniProtKB-UniRule"/>
</dbReference>
<dbReference type="CDD" id="cd16432">
    <property type="entry name" value="CheB_Rec"/>
    <property type="match status" value="1"/>
</dbReference>
<dbReference type="CDD" id="cd17541">
    <property type="entry name" value="REC_CheB-like"/>
    <property type="match status" value="1"/>
</dbReference>
<dbReference type="FunFam" id="3.40.50.2300:FF:000077">
    <property type="entry name" value="Chemotaxis response regulator"/>
    <property type="match status" value="1"/>
</dbReference>
<dbReference type="Gene3D" id="3.40.50.2300">
    <property type="match status" value="1"/>
</dbReference>
<dbReference type="Gene3D" id="3.40.50.180">
    <property type="entry name" value="Methylesterase CheB, C-terminal domain"/>
    <property type="match status" value="1"/>
</dbReference>
<dbReference type="HAMAP" id="MF_00099">
    <property type="entry name" value="CheB_chemtxs"/>
    <property type="match status" value="1"/>
</dbReference>
<dbReference type="InterPro" id="IPR008248">
    <property type="entry name" value="CheB-like"/>
</dbReference>
<dbReference type="InterPro" id="IPR035909">
    <property type="entry name" value="CheB_C"/>
</dbReference>
<dbReference type="InterPro" id="IPR011006">
    <property type="entry name" value="CheY-like_superfamily"/>
</dbReference>
<dbReference type="InterPro" id="IPR000673">
    <property type="entry name" value="Sig_transdc_resp-reg_Me-estase"/>
</dbReference>
<dbReference type="InterPro" id="IPR001789">
    <property type="entry name" value="Sig_transdc_resp-reg_receiver"/>
</dbReference>
<dbReference type="NCBIfam" id="NF001965">
    <property type="entry name" value="PRK00742.1"/>
    <property type="match status" value="1"/>
</dbReference>
<dbReference type="PANTHER" id="PTHR42872">
    <property type="entry name" value="PROTEIN-GLUTAMATE METHYLESTERASE/PROTEIN-GLUTAMINE GLUTAMINASE"/>
    <property type="match status" value="1"/>
</dbReference>
<dbReference type="PANTHER" id="PTHR42872:SF3">
    <property type="entry name" value="PROTEIN-GLUTAMATE METHYLESTERASE_PROTEIN-GLUTAMINE GLUTAMINASE 1"/>
    <property type="match status" value="1"/>
</dbReference>
<dbReference type="Pfam" id="PF01339">
    <property type="entry name" value="CheB_methylest"/>
    <property type="match status" value="1"/>
</dbReference>
<dbReference type="Pfam" id="PF00072">
    <property type="entry name" value="Response_reg"/>
    <property type="match status" value="1"/>
</dbReference>
<dbReference type="PIRSF" id="PIRSF000876">
    <property type="entry name" value="RR_chemtxs_CheB"/>
    <property type="match status" value="1"/>
</dbReference>
<dbReference type="SMART" id="SM00448">
    <property type="entry name" value="REC"/>
    <property type="match status" value="1"/>
</dbReference>
<dbReference type="SUPFAM" id="SSF52172">
    <property type="entry name" value="CheY-like"/>
    <property type="match status" value="1"/>
</dbReference>
<dbReference type="SUPFAM" id="SSF52738">
    <property type="entry name" value="Methylesterase CheB, C-terminal domain"/>
    <property type="match status" value="1"/>
</dbReference>
<dbReference type="PROSITE" id="PS50122">
    <property type="entry name" value="CHEB"/>
    <property type="match status" value="1"/>
</dbReference>
<dbReference type="PROSITE" id="PS50110">
    <property type="entry name" value="RESPONSE_REGULATORY"/>
    <property type="match status" value="1"/>
</dbReference>
<gene>
    <name evidence="1" type="primary">cheB</name>
    <name type="ordered locus">Patl_3026</name>
</gene>
<keyword id="KW-0145">Chemotaxis</keyword>
<keyword id="KW-0963">Cytoplasm</keyword>
<keyword id="KW-0378">Hydrolase</keyword>
<keyword id="KW-0597">Phosphoprotein</keyword>
<reference key="1">
    <citation type="submission" date="2006-06" db="EMBL/GenBank/DDBJ databases">
        <title>Complete sequence of Pseudoalteromonas atlantica T6c.</title>
        <authorList>
            <consortium name="US DOE Joint Genome Institute"/>
            <person name="Copeland A."/>
            <person name="Lucas S."/>
            <person name="Lapidus A."/>
            <person name="Barry K."/>
            <person name="Detter J.C."/>
            <person name="Glavina del Rio T."/>
            <person name="Hammon N."/>
            <person name="Israni S."/>
            <person name="Dalin E."/>
            <person name="Tice H."/>
            <person name="Pitluck S."/>
            <person name="Saunders E."/>
            <person name="Brettin T."/>
            <person name="Bruce D."/>
            <person name="Han C."/>
            <person name="Tapia R."/>
            <person name="Gilna P."/>
            <person name="Schmutz J."/>
            <person name="Larimer F."/>
            <person name="Land M."/>
            <person name="Hauser L."/>
            <person name="Kyrpides N."/>
            <person name="Kim E."/>
            <person name="Karls A.C."/>
            <person name="Bartlett D."/>
            <person name="Higgins B.P."/>
            <person name="Richardson P."/>
        </authorList>
    </citation>
    <scope>NUCLEOTIDE SEQUENCE [LARGE SCALE GENOMIC DNA]</scope>
    <source>
        <strain>T6c / ATCC BAA-1087</strain>
    </source>
</reference>
<sequence length="379" mass="40991">MAYKILVVDDSIFFRRRVKEILEQDPSLQVIGEARNGQEAIEMVATLNPDVVTMDVEMPIMDGITAVKKIMARKPVPIIMFSSLTLQGAKATLDALDSGAMDFLPKKFEDIAANRQDAVALLQSRVKSLCRKQHGLRPASVRVAPPKAILFNKPVSRNPAKRSVQATSSIPLGAPLYHSSSSGIPSGKKYRCLAIGTSTGGPVALQKVLTAVPKNFPYPIFIVQHMPGSFTKAFAERLNQLSQLTVKEAMNGEEVKAGVAYLAPGGRQMTVQGDSQRVSFRIYDAPDSADILYKPCVDITFASIAHVYHGDVLGVILTGMGSDGKLGASKLKSKGAKIWVQDELSSVVYGMPQAVMNAGIAEKEFSIDAFESHILKEMA</sequence>
<proteinExistence type="inferred from homology"/>
<organism>
    <name type="scientific">Pseudoalteromonas atlantica (strain T6c / ATCC BAA-1087)</name>
    <dbReference type="NCBI Taxonomy" id="3042615"/>
    <lineage>
        <taxon>Bacteria</taxon>
        <taxon>Pseudomonadati</taxon>
        <taxon>Pseudomonadota</taxon>
        <taxon>Gammaproteobacteria</taxon>
        <taxon>Alteromonadales</taxon>
        <taxon>Alteromonadaceae</taxon>
        <taxon>Paraglaciecola</taxon>
    </lineage>
</organism>
<protein>
    <recommendedName>
        <fullName evidence="1">Protein-glutamate methylesterase/protein-glutamine glutaminase</fullName>
        <ecNumber evidence="1">3.1.1.61</ecNumber>
        <ecNumber evidence="1">3.5.1.44</ecNumber>
    </recommendedName>
</protein>
<accession>Q15RF6</accession>
<evidence type="ECO:0000255" key="1">
    <source>
        <dbReference type="HAMAP-Rule" id="MF_00099"/>
    </source>
</evidence>